<organism>
    <name type="scientific">Chromohalobacter salexigens (strain ATCC BAA-138 / DSM 3043 / CIP 106854 / NCIMB 13768 / 1H11)</name>
    <dbReference type="NCBI Taxonomy" id="290398"/>
    <lineage>
        <taxon>Bacteria</taxon>
        <taxon>Pseudomonadati</taxon>
        <taxon>Pseudomonadota</taxon>
        <taxon>Gammaproteobacteria</taxon>
        <taxon>Oceanospirillales</taxon>
        <taxon>Halomonadaceae</taxon>
        <taxon>Chromohalobacter</taxon>
    </lineage>
</organism>
<sequence>MHELTGKDKLAFNKLQKRLRRQVGNAIVDYGMIRDGDKVMVCLSGGKDSYTMLDILMNLQRNAPVAFELVAVNLDQKQPGFPEHVLPEYLERVGVPYHIVERDTYSVVKEKTPEGKTTCALCSRLRRGTLYGFAEEIGANKVALGHHREDMLETLFLNMFFGGSLKSMPPKLLSDDGKHIVIRPLAYCREADIAEYAEWREFPIIPCNLCGSQPNLQRQVVKEMLTEWEEKHPGRLETMFKAITNVAPSQLADRAMFDFEGLEDKQRDFLARRIETFDVLAREA</sequence>
<proteinExistence type="inferred from homology"/>
<keyword id="KW-0004">4Fe-4S</keyword>
<keyword id="KW-0067">ATP-binding</keyword>
<keyword id="KW-0963">Cytoplasm</keyword>
<keyword id="KW-0408">Iron</keyword>
<keyword id="KW-0411">Iron-sulfur</keyword>
<keyword id="KW-0460">Magnesium</keyword>
<keyword id="KW-0479">Metal-binding</keyword>
<keyword id="KW-0547">Nucleotide-binding</keyword>
<keyword id="KW-1185">Reference proteome</keyword>
<keyword id="KW-0694">RNA-binding</keyword>
<keyword id="KW-0808">Transferase</keyword>
<keyword id="KW-0819">tRNA processing</keyword>
<keyword id="KW-0820">tRNA-binding</keyword>
<dbReference type="EC" id="2.8.1.-" evidence="1"/>
<dbReference type="EMBL" id="CP000285">
    <property type="protein sequence ID" value="ABE58232.1"/>
    <property type="molecule type" value="Genomic_DNA"/>
</dbReference>
<dbReference type="RefSeq" id="WP_011506178.1">
    <property type="nucleotide sequence ID" value="NC_007963.1"/>
</dbReference>
<dbReference type="SMR" id="Q1QZ76"/>
<dbReference type="STRING" id="290398.Csal_0875"/>
<dbReference type="GeneID" id="95333624"/>
<dbReference type="KEGG" id="csa:Csal_0875"/>
<dbReference type="eggNOG" id="COG0037">
    <property type="taxonomic scope" value="Bacteria"/>
</dbReference>
<dbReference type="HOGENOM" id="CLU_026481_0_0_6"/>
<dbReference type="OrthoDB" id="9801054at2"/>
<dbReference type="Proteomes" id="UP000000239">
    <property type="component" value="Chromosome"/>
</dbReference>
<dbReference type="GO" id="GO:0005737">
    <property type="term" value="C:cytoplasm"/>
    <property type="evidence" value="ECO:0007669"/>
    <property type="project" value="UniProtKB-SubCell"/>
</dbReference>
<dbReference type="GO" id="GO:0051539">
    <property type="term" value="F:4 iron, 4 sulfur cluster binding"/>
    <property type="evidence" value="ECO:0007669"/>
    <property type="project" value="UniProtKB-UniRule"/>
</dbReference>
<dbReference type="GO" id="GO:0005524">
    <property type="term" value="F:ATP binding"/>
    <property type="evidence" value="ECO:0007669"/>
    <property type="project" value="UniProtKB-UniRule"/>
</dbReference>
<dbReference type="GO" id="GO:0000287">
    <property type="term" value="F:magnesium ion binding"/>
    <property type="evidence" value="ECO:0007669"/>
    <property type="project" value="UniProtKB-UniRule"/>
</dbReference>
<dbReference type="GO" id="GO:0016783">
    <property type="term" value="F:sulfurtransferase activity"/>
    <property type="evidence" value="ECO:0007669"/>
    <property type="project" value="UniProtKB-UniRule"/>
</dbReference>
<dbReference type="GO" id="GO:0000049">
    <property type="term" value="F:tRNA binding"/>
    <property type="evidence" value="ECO:0007669"/>
    <property type="project" value="UniProtKB-KW"/>
</dbReference>
<dbReference type="GO" id="GO:0034227">
    <property type="term" value="P:tRNA thio-modification"/>
    <property type="evidence" value="ECO:0007669"/>
    <property type="project" value="UniProtKB-UniRule"/>
</dbReference>
<dbReference type="CDD" id="cd24138">
    <property type="entry name" value="TtcA-like"/>
    <property type="match status" value="1"/>
</dbReference>
<dbReference type="Gene3D" id="3.40.50.620">
    <property type="entry name" value="HUPs"/>
    <property type="match status" value="1"/>
</dbReference>
<dbReference type="HAMAP" id="MF_01850">
    <property type="entry name" value="TtcA"/>
    <property type="match status" value="1"/>
</dbReference>
<dbReference type="InterPro" id="IPR014729">
    <property type="entry name" value="Rossmann-like_a/b/a_fold"/>
</dbReference>
<dbReference type="InterPro" id="IPR011063">
    <property type="entry name" value="TilS/TtcA_N"/>
</dbReference>
<dbReference type="InterPro" id="IPR012089">
    <property type="entry name" value="tRNA_Cyd_32_2_STrfase"/>
</dbReference>
<dbReference type="InterPro" id="IPR035107">
    <property type="entry name" value="tRNA_thiolation_TtcA_Ctu1"/>
</dbReference>
<dbReference type="NCBIfam" id="NF007972">
    <property type="entry name" value="PRK10696.1"/>
    <property type="match status" value="1"/>
</dbReference>
<dbReference type="PANTHER" id="PTHR43686:SF1">
    <property type="entry name" value="AMINOTRAN_5 DOMAIN-CONTAINING PROTEIN"/>
    <property type="match status" value="1"/>
</dbReference>
<dbReference type="PANTHER" id="PTHR43686">
    <property type="entry name" value="SULFURTRANSFERASE-RELATED"/>
    <property type="match status" value="1"/>
</dbReference>
<dbReference type="Pfam" id="PF01171">
    <property type="entry name" value="ATP_bind_3"/>
    <property type="match status" value="1"/>
</dbReference>
<dbReference type="PIRSF" id="PIRSF004976">
    <property type="entry name" value="ATPase_YdaO"/>
    <property type="match status" value="1"/>
</dbReference>
<dbReference type="SUPFAM" id="SSF52402">
    <property type="entry name" value="Adenine nucleotide alpha hydrolases-like"/>
    <property type="match status" value="1"/>
</dbReference>
<accession>Q1QZ76</accession>
<reference key="1">
    <citation type="journal article" date="2011" name="Stand. Genomic Sci.">
        <title>Complete genome sequence of the halophilic and highly halotolerant Chromohalobacter salexigens type strain (1H11(T)).</title>
        <authorList>
            <person name="Copeland A."/>
            <person name="O'Connor K."/>
            <person name="Lucas S."/>
            <person name="Lapidus A."/>
            <person name="Berry K.W."/>
            <person name="Detter J.C."/>
            <person name="Del Rio T.G."/>
            <person name="Hammon N."/>
            <person name="Dalin E."/>
            <person name="Tice H."/>
            <person name="Pitluck S."/>
            <person name="Bruce D."/>
            <person name="Goodwin L."/>
            <person name="Han C."/>
            <person name="Tapia R."/>
            <person name="Saunders E."/>
            <person name="Schmutz J."/>
            <person name="Brettin T."/>
            <person name="Larimer F."/>
            <person name="Land M."/>
            <person name="Hauser L."/>
            <person name="Vargas C."/>
            <person name="Nieto J.J."/>
            <person name="Kyrpides N.C."/>
            <person name="Ivanova N."/>
            <person name="Goker M."/>
            <person name="Klenk H.P."/>
            <person name="Csonka L.N."/>
            <person name="Woyke T."/>
        </authorList>
    </citation>
    <scope>NUCLEOTIDE SEQUENCE [LARGE SCALE GENOMIC DNA]</scope>
    <source>
        <strain>ATCC BAA-138 / DSM 3043 / CIP 106854 / NCIMB 13768 / 1H11</strain>
    </source>
</reference>
<feature type="chain" id="PRO_0000348700" description="tRNA-cytidine(32) 2-sulfurtransferase">
    <location>
        <begin position="1"/>
        <end position="284"/>
    </location>
</feature>
<feature type="short sequence motif" description="PP-loop motif" evidence="1">
    <location>
        <begin position="44"/>
        <end position="49"/>
    </location>
</feature>
<feature type="binding site" evidence="1">
    <location>
        <position position="119"/>
    </location>
    <ligand>
        <name>[4Fe-4S] cluster</name>
        <dbReference type="ChEBI" id="CHEBI:49883"/>
    </ligand>
</feature>
<feature type="binding site" evidence="1">
    <location>
        <position position="122"/>
    </location>
    <ligand>
        <name>[4Fe-4S] cluster</name>
        <dbReference type="ChEBI" id="CHEBI:49883"/>
    </ligand>
</feature>
<feature type="binding site" evidence="1">
    <location>
        <position position="210"/>
    </location>
    <ligand>
        <name>[4Fe-4S] cluster</name>
        <dbReference type="ChEBI" id="CHEBI:49883"/>
    </ligand>
</feature>
<name>TTCA_CHRSD</name>
<gene>
    <name evidence="1" type="primary">ttcA</name>
    <name type="ordered locus">Csal_0875</name>
</gene>
<protein>
    <recommendedName>
        <fullName evidence="1">tRNA-cytidine(32) 2-sulfurtransferase</fullName>
        <ecNumber evidence="1">2.8.1.-</ecNumber>
    </recommendedName>
    <alternativeName>
        <fullName evidence="1">Two-thiocytidine biosynthesis protein A</fullName>
    </alternativeName>
    <alternativeName>
        <fullName evidence="1">tRNA 2-thiocytidine biosynthesis protein TtcA</fullName>
    </alternativeName>
</protein>
<evidence type="ECO:0000255" key="1">
    <source>
        <dbReference type="HAMAP-Rule" id="MF_01850"/>
    </source>
</evidence>
<comment type="function">
    <text evidence="1">Catalyzes the ATP-dependent 2-thiolation of cytidine in position 32 of tRNA, to form 2-thiocytidine (s(2)C32). The sulfur atoms are provided by the cysteine/cysteine desulfurase (IscS) system.</text>
</comment>
<comment type="catalytic activity">
    <reaction evidence="1">
        <text>cytidine(32) in tRNA + S-sulfanyl-L-cysteinyl-[cysteine desulfurase] + AH2 + ATP = 2-thiocytidine(32) in tRNA + L-cysteinyl-[cysteine desulfurase] + A + AMP + diphosphate + H(+)</text>
        <dbReference type="Rhea" id="RHEA:57048"/>
        <dbReference type="Rhea" id="RHEA-COMP:10288"/>
        <dbReference type="Rhea" id="RHEA-COMP:12157"/>
        <dbReference type="Rhea" id="RHEA-COMP:12158"/>
        <dbReference type="Rhea" id="RHEA-COMP:14821"/>
        <dbReference type="ChEBI" id="CHEBI:13193"/>
        <dbReference type="ChEBI" id="CHEBI:15378"/>
        <dbReference type="ChEBI" id="CHEBI:17499"/>
        <dbReference type="ChEBI" id="CHEBI:29950"/>
        <dbReference type="ChEBI" id="CHEBI:30616"/>
        <dbReference type="ChEBI" id="CHEBI:33019"/>
        <dbReference type="ChEBI" id="CHEBI:61963"/>
        <dbReference type="ChEBI" id="CHEBI:82748"/>
        <dbReference type="ChEBI" id="CHEBI:141453"/>
        <dbReference type="ChEBI" id="CHEBI:456215"/>
    </reaction>
    <physiologicalReaction direction="left-to-right" evidence="1">
        <dbReference type="Rhea" id="RHEA:57049"/>
    </physiologicalReaction>
</comment>
<comment type="cofactor">
    <cofactor evidence="1">
        <name>Mg(2+)</name>
        <dbReference type="ChEBI" id="CHEBI:18420"/>
    </cofactor>
</comment>
<comment type="cofactor">
    <cofactor evidence="1">
        <name>[4Fe-4S] cluster</name>
        <dbReference type="ChEBI" id="CHEBI:49883"/>
    </cofactor>
    <text evidence="1">Binds 1 [4Fe-4S] cluster per subunit. The cluster is chelated by three Cys residues, the fourth Fe has a free coordination site that may bind a sulfur atom transferred from the persulfide of IscS.</text>
</comment>
<comment type="pathway">
    <text evidence="1">tRNA modification.</text>
</comment>
<comment type="subunit">
    <text evidence="1">Homodimer.</text>
</comment>
<comment type="subcellular location">
    <subcellularLocation>
        <location evidence="1">Cytoplasm</location>
    </subcellularLocation>
</comment>
<comment type="miscellaneous">
    <text evidence="1">The thiolation reaction likely consists of two steps: a first activation step by ATP to form an adenylated intermediate of the target base of tRNA, and a second nucleophilic substitution step of the sulfur (S) atom supplied by the hydrosulfide attached to the Fe-S cluster.</text>
</comment>
<comment type="similarity">
    <text evidence="1">Belongs to the TtcA family.</text>
</comment>